<dbReference type="EC" id="2.4.99.17" evidence="1"/>
<dbReference type="EMBL" id="CT971583">
    <property type="protein sequence ID" value="CAK23010.1"/>
    <property type="molecule type" value="Genomic_DNA"/>
</dbReference>
<dbReference type="SMR" id="A5GJ95"/>
<dbReference type="STRING" id="32051.SynWH7803_0584"/>
<dbReference type="KEGG" id="syx:SynWH7803_0584"/>
<dbReference type="eggNOG" id="COG0809">
    <property type="taxonomic scope" value="Bacteria"/>
</dbReference>
<dbReference type="HOGENOM" id="CLU_039110_1_0_3"/>
<dbReference type="OrthoDB" id="9805933at2"/>
<dbReference type="UniPathway" id="UPA00392"/>
<dbReference type="Proteomes" id="UP000001566">
    <property type="component" value="Chromosome"/>
</dbReference>
<dbReference type="GO" id="GO:0005737">
    <property type="term" value="C:cytoplasm"/>
    <property type="evidence" value="ECO:0007669"/>
    <property type="project" value="UniProtKB-SubCell"/>
</dbReference>
<dbReference type="GO" id="GO:0051075">
    <property type="term" value="F:S-adenosylmethionine:tRNA ribosyltransferase-isomerase activity"/>
    <property type="evidence" value="ECO:0007669"/>
    <property type="project" value="UniProtKB-EC"/>
</dbReference>
<dbReference type="GO" id="GO:0008616">
    <property type="term" value="P:queuosine biosynthetic process"/>
    <property type="evidence" value="ECO:0007669"/>
    <property type="project" value="UniProtKB-UniRule"/>
</dbReference>
<dbReference type="GO" id="GO:0002099">
    <property type="term" value="P:tRNA wobble guanine modification"/>
    <property type="evidence" value="ECO:0007669"/>
    <property type="project" value="TreeGrafter"/>
</dbReference>
<dbReference type="Gene3D" id="2.40.10.240">
    <property type="entry name" value="QueA-like"/>
    <property type="match status" value="1"/>
</dbReference>
<dbReference type="Gene3D" id="3.40.1780.10">
    <property type="entry name" value="QueA-like"/>
    <property type="match status" value="2"/>
</dbReference>
<dbReference type="HAMAP" id="MF_00113">
    <property type="entry name" value="QueA"/>
    <property type="match status" value="1"/>
</dbReference>
<dbReference type="InterPro" id="IPR003699">
    <property type="entry name" value="QueA"/>
</dbReference>
<dbReference type="InterPro" id="IPR042118">
    <property type="entry name" value="QueA_dom1"/>
</dbReference>
<dbReference type="InterPro" id="IPR042119">
    <property type="entry name" value="QueA_dom2"/>
</dbReference>
<dbReference type="InterPro" id="IPR036100">
    <property type="entry name" value="QueA_sf"/>
</dbReference>
<dbReference type="NCBIfam" id="NF001140">
    <property type="entry name" value="PRK00147.1"/>
    <property type="match status" value="1"/>
</dbReference>
<dbReference type="NCBIfam" id="TIGR00113">
    <property type="entry name" value="queA"/>
    <property type="match status" value="1"/>
</dbReference>
<dbReference type="PANTHER" id="PTHR30307">
    <property type="entry name" value="S-ADENOSYLMETHIONINE:TRNA RIBOSYLTRANSFERASE-ISOMERASE"/>
    <property type="match status" value="1"/>
</dbReference>
<dbReference type="PANTHER" id="PTHR30307:SF0">
    <property type="entry name" value="S-ADENOSYLMETHIONINE:TRNA RIBOSYLTRANSFERASE-ISOMERASE"/>
    <property type="match status" value="1"/>
</dbReference>
<dbReference type="Pfam" id="PF02547">
    <property type="entry name" value="Queuosine_synth"/>
    <property type="match status" value="1"/>
</dbReference>
<dbReference type="SUPFAM" id="SSF111337">
    <property type="entry name" value="QueA-like"/>
    <property type="match status" value="1"/>
</dbReference>
<name>QUEA_SYNPW</name>
<sequence length="370" mass="40522">MADPRDLQLSAYDYELPEARIAQRPVEPRHAAKLLMVPPLEASSLQGRHGTVWDWQNELRSGDLLVVNDTRVLQARLRVRRSGGGLGELLVLEPRGEGRWLCLARPGKKLRPGDQVWLEALEQDPLPLQVLASDPASGGRIVQFPPAFVDAMAIEALLQRYGEVPLPPYITCHDDSDQERYQTRYASRPGAVAAPTAGLHLSDDLLQAIRARGVQMSSVTLHVGLGTFRPVETEDLSELSLHSEWVEVSTQLVEAVQACRQRGGRVIAVGTTSVRALEGAAAAGGGDLQPLKGPVDLVIQPGYQFRVVDGLLTNFHLPKSSLLLLVSALIGRERLLDLYALAIANDYRFYSYGDAMWIAPGAVLMDARPR</sequence>
<accession>A5GJ95</accession>
<reference key="1">
    <citation type="submission" date="2006-05" db="EMBL/GenBank/DDBJ databases">
        <authorList>
            <consortium name="Genoscope"/>
        </authorList>
    </citation>
    <scope>NUCLEOTIDE SEQUENCE [LARGE SCALE GENOMIC DNA]</scope>
    <source>
        <strain>WH7803</strain>
    </source>
</reference>
<organism>
    <name type="scientific">Synechococcus sp. (strain WH7803)</name>
    <dbReference type="NCBI Taxonomy" id="32051"/>
    <lineage>
        <taxon>Bacteria</taxon>
        <taxon>Bacillati</taxon>
        <taxon>Cyanobacteriota</taxon>
        <taxon>Cyanophyceae</taxon>
        <taxon>Synechococcales</taxon>
        <taxon>Synechococcaceae</taxon>
        <taxon>Synechococcus</taxon>
    </lineage>
</organism>
<evidence type="ECO:0000255" key="1">
    <source>
        <dbReference type="HAMAP-Rule" id="MF_00113"/>
    </source>
</evidence>
<gene>
    <name evidence="1" type="primary">queA</name>
    <name type="ordered locus">SynWH7803_0584</name>
</gene>
<feature type="chain" id="PRO_1000015298" description="S-adenosylmethionine:tRNA ribosyltransferase-isomerase">
    <location>
        <begin position="1"/>
        <end position="370"/>
    </location>
</feature>
<keyword id="KW-0963">Cytoplasm</keyword>
<keyword id="KW-0671">Queuosine biosynthesis</keyword>
<keyword id="KW-1185">Reference proteome</keyword>
<keyword id="KW-0949">S-adenosyl-L-methionine</keyword>
<keyword id="KW-0808">Transferase</keyword>
<comment type="function">
    <text evidence="1">Transfers and isomerizes the ribose moiety from AdoMet to the 7-aminomethyl group of 7-deazaguanine (preQ1-tRNA) to give epoxyqueuosine (oQ-tRNA).</text>
</comment>
<comment type="catalytic activity">
    <reaction evidence="1">
        <text>7-aminomethyl-7-carbaguanosine(34) in tRNA + S-adenosyl-L-methionine = epoxyqueuosine(34) in tRNA + adenine + L-methionine + 2 H(+)</text>
        <dbReference type="Rhea" id="RHEA:32155"/>
        <dbReference type="Rhea" id="RHEA-COMP:10342"/>
        <dbReference type="Rhea" id="RHEA-COMP:18582"/>
        <dbReference type="ChEBI" id="CHEBI:15378"/>
        <dbReference type="ChEBI" id="CHEBI:16708"/>
        <dbReference type="ChEBI" id="CHEBI:57844"/>
        <dbReference type="ChEBI" id="CHEBI:59789"/>
        <dbReference type="ChEBI" id="CHEBI:82833"/>
        <dbReference type="ChEBI" id="CHEBI:194443"/>
        <dbReference type="EC" id="2.4.99.17"/>
    </reaction>
</comment>
<comment type="pathway">
    <text evidence="1">tRNA modification; tRNA-queuosine biosynthesis.</text>
</comment>
<comment type="subunit">
    <text evidence="1">Monomer.</text>
</comment>
<comment type="subcellular location">
    <subcellularLocation>
        <location evidence="1">Cytoplasm</location>
    </subcellularLocation>
</comment>
<comment type="similarity">
    <text evidence="1">Belongs to the QueA family.</text>
</comment>
<proteinExistence type="inferred from homology"/>
<protein>
    <recommendedName>
        <fullName evidence="1">S-adenosylmethionine:tRNA ribosyltransferase-isomerase</fullName>
        <ecNumber evidence="1">2.4.99.17</ecNumber>
    </recommendedName>
    <alternativeName>
        <fullName evidence="1">Queuosine biosynthesis protein QueA</fullName>
    </alternativeName>
</protein>